<name>LEXA_SALCH</name>
<gene>
    <name evidence="1" type="primary">lexA</name>
    <name type="ordered locus">SCH_4116</name>
</gene>
<reference key="1">
    <citation type="journal article" date="2005" name="Nucleic Acids Res.">
        <title>The genome sequence of Salmonella enterica serovar Choleraesuis, a highly invasive and resistant zoonotic pathogen.</title>
        <authorList>
            <person name="Chiu C.-H."/>
            <person name="Tang P."/>
            <person name="Chu C."/>
            <person name="Hu S."/>
            <person name="Bao Q."/>
            <person name="Yu J."/>
            <person name="Chou Y.-Y."/>
            <person name="Wang H.-S."/>
            <person name="Lee Y.-S."/>
        </authorList>
    </citation>
    <scope>NUCLEOTIDE SEQUENCE [LARGE SCALE GENOMIC DNA]</scope>
    <source>
        <strain>SC-B67</strain>
    </source>
</reference>
<accession>Q57GZ0</accession>
<protein>
    <recommendedName>
        <fullName evidence="1">LexA repressor</fullName>
        <ecNumber evidence="1">3.4.21.88</ecNumber>
    </recommendedName>
</protein>
<comment type="function">
    <text evidence="1">Represses a number of genes involved in the response to DNA damage (SOS response), including recA and lexA. Binds to the 16 bp palindromic sequence 5'-CTGTATATATATACAG-3'. In the presence of single-stranded DNA, RecA interacts with LexA causing an autocatalytic cleavage which disrupts the DNA-binding part of LexA, leading to derepression of the SOS regulon and eventually DNA repair.</text>
</comment>
<comment type="catalytic activity">
    <reaction evidence="1">
        <text>Hydrolysis of Ala-|-Gly bond in repressor LexA.</text>
        <dbReference type="EC" id="3.4.21.88"/>
    </reaction>
</comment>
<comment type="subunit">
    <text evidence="1">Homodimer.</text>
</comment>
<comment type="similarity">
    <text evidence="1">Belongs to the peptidase S24 family.</text>
</comment>
<dbReference type="EC" id="3.4.21.88" evidence="1"/>
<dbReference type="EMBL" id="AE017220">
    <property type="protein sequence ID" value="AAX68022.1"/>
    <property type="molecule type" value="Genomic_DNA"/>
</dbReference>
<dbReference type="RefSeq" id="WP_000646079.1">
    <property type="nucleotide sequence ID" value="NC_006905.1"/>
</dbReference>
<dbReference type="SMR" id="Q57GZ0"/>
<dbReference type="MEROPS" id="S24.001"/>
<dbReference type="KEGG" id="sec:SCH_4116"/>
<dbReference type="HOGENOM" id="CLU_066192_45_3_6"/>
<dbReference type="Proteomes" id="UP000000538">
    <property type="component" value="Chromosome"/>
</dbReference>
<dbReference type="GO" id="GO:0003677">
    <property type="term" value="F:DNA binding"/>
    <property type="evidence" value="ECO:0007669"/>
    <property type="project" value="UniProtKB-UniRule"/>
</dbReference>
<dbReference type="GO" id="GO:0004252">
    <property type="term" value="F:serine-type endopeptidase activity"/>
    <property type="evidence" value="ECO:0007669"/>
    <property type="project" value="UniProtKB-UniRule"/>
</dbReference>
<dbReference type="GO" id="GO:0006281">
    <property type="term" value="P:DNA repair"/>
    <property type="evidence" value="ECO:0007669"/>
    <property type="project" value="UniProtKB-UniRule"/>
</dbReference>
<dbReference type="GO" id="GO:0006260">
    <property type="term" value="P:DNA replication"/>
    <property type="evidence" value="ECO:0007669"/>
    <property type="project" value="UniProtKB-UniRule"/>
</dbReference>
<dbReference type="GO" id="GO:0045892">
    <property type="term" value="P:negative regulation of DNA-templated transcription"/>
    <property type="evidence" value="ECO:0007669"/>
    <property type="project" value="UniProtKB-UniRule"/>
</dbReference>
<dbReference type="GO" id="GO:0006508">
    <property type="term" value="P:proteolysis"/>
    <property type="evidence" value="ECO:0007669"/>
    <property type="project" value="InterPro"/>
</dbReference>
<dbReference type="GO" id="GO:0009432">
    <property type="term" value="P:SOS response"/>
    <property type="evidence" value="ECO:0007669"/>
    <property type="project" value="UniProtKB-UniRule"/>
</dbReference>
<dbReference type="CDD" id="cd06529">
    <property type="entry name" value="S24_LexA-like"/>
    <property type="match status" value="1"/>
</dbReference>
<dbReference type="FunFam" id="1.10.10.10:FF:000009">
    <property type="entry name" value="LexA repressor"/>
    <property type="match status" value="1"/>
</dbReference>
<dbReference type="FunFam" id="2.10.109.10:FF:000001">
    <property type="entry name" value="LexA repressor"/>
    <property type="match status" value="1"/>
</dbReference>
<dbReference type="Gene3D" id="2.10.109.10">
    <property type="entry name" value="Umud Fragment, subunit A"/>
    <property type="match status" value="1"/>
</dbReference>
<dbReference type="Gene3D" id="1.10.10.10">
    <property type="entry name" value="Winged helix-like DNA-binding domain superfamily/Winged helix DNA-binding domain"/>
    <property type="match status" value="1"/>
</dbReference>
<dbReference type="HAMAP" id="MF_00015">
    <property type="entry name" value="LexA"/>
    <property type="match status" value="1"/>
</dbReference>
<dbReference type="InterPro" id="IPR006200">
    <property type="entry name" value="LexA"/>
</dbReference>
<dbReference type="InterPro" id="IPR039418">
    <property type="entry name" value="LexA-like"/>
</dbReference>
<dbReference type="InterPro" id="IPR036286">
    <property type="entry name" value="LexA/Signal_pep-like_sf"/>
</dbReference>
<dbReference type="InterPro" id="IPR006199">
    <property type="entry name" value="LexA_DNA-bd_dom"/>
</dbReference>
<dbReference type="InterPro" id="IPR050077">
    <property type="entry name" value="LexA_repressor"/>
</dbReference>
<dbReference type="InterPro" id="IPR006197">
    <property type="entry name" value="Peptidase_S24_LexA"/>
</dbReference>
<dbReference type="InterPro" id="IPR015927">
    <property type="entry name" value="Peptidase_S24_S26A/B/C"/>
</dbReference>
<dbReference type="InterPro" id="IPR036388">
    <property type="entry name" value="WH-like_DNA-bd_sf"/>
</dbReference>
<dbReference type="InterPro" id="IPR036390">
    <property type="entry name" value="WH_DNA-bd_sf"/>
</dbReference>
<dbReference type="NCBIfam" id="TIGR00498">
    <property type="entry name" value="lexA"/>
    <property type="match status" value="1"/>
</dbReference>
<dbReference type="PANTHER" id="PTHR33516">
    <property type="entry name" value="LEXA REPRESSOR"/>
    <property type="match status" value="1"/>
</dbReference>
<dbReference type="PANTHER" id="PTHR33516:SF2">
    <property type="entry name" value="LEXA REPRESSOR-RELATED"/>
    <property type="match status" value="1"/>
</dbReference>
<dbReference type="Pfam" id="PF01726">
    <property type="entry name" value="LexA_DNA_bind"/>
    <property type="match status" value="1"/>
</dbReference>
<dbReference type="Pfam" id="PF00717">
    <property type="entry name" value="Peptidase_S24"/>
    <property type="match status" value="1"/>
</dbReference>
<dbReference type="PRINTS" id="PR00726">
    <property type="entry name" value="LEXASERPTASE"/>
</dbReference>
<dbReference type="SUPFAM" id="SSF51306">
    <property type="entry name" value="LexA/Signal peptidase"/>
    <property type="match status" value="1"/>
</dbReference>
<dbReference type="SUPFAM" id="SSF46785">
    <property type="entry name" value="Winged helix' DNA-binding domain"/>
    <property type="match status" value="1"/>
</dbReference>
<proteinExistence type="inferred from homology"/>
<keyword id="KW-0068">Autocatalytic cleavage</keyword>
<keyword id="KW-0227">DNA damage</keyword>
<keyword id="KW-0234">DNA repair</keyword>
<keyword id="KW-0235">DNA replication</keyword>
<keyword id="KW-0238">DNA-binding</keyword>
<keyword id="KW-0378">Hydrolase</keyword>
<keyword id="KW-0678">Repressor</keyword>
<keyword id="KW-0742">SOS response</keyword>
<keyword id="KW-0804">Transcription</keyword>
<keyword id="KW-0805">Transcription regulation</keyword>
<feature type="chain" id="PRO_0000170080" description="LexA repressor">
    <location>
        <begin position="1"/>
        <end position="202"/>
    </location>
</feature>
<feature type="DNA-binding region" description="H-T-H motif" evidence="1">
    <location>
        <begin position="28"/>
        <end position="48"/>
    </location>
</feature>
<feature type="active site" description="For autocatalytic cleavage activity" evidence="1">
    <location>
        <position position="119"/>
    </location>
</feature>
<feature type="active site" description="For autocatalytic cleavage activity" evidence="1">
    <location>
        <position position="156"/>
    </location>
</feature>
<feature type="site" description="Cleavage; by autolysis" evidence="1">
    <location>
        <begin position="84"/>
        <end position="85"/>
    </location>
</feature>
<sequence length="202" mass="22305">MKALTARQQEVFDLIRDHISQTGMPPTRAEIAQRLGFRSPNAAEEHLKALARKGVLEIVSGASRGIRLLQEEEDGLPLVGRVAAGEPLLAQQHIEGHYQVDPSLFKPSADFLLRVSGMSMKDIGIMDGDLLAVHKTQDVRNGQVVVARIDDEVTVKRLKKQGNKVELLPENSEFTPIVVDLREQSFTIEGLAVGVIRNGEWL</sequence>
<organism>
    <name type="scientific">Salmonella choleraesuis (strain SC-B67)</name>
    <dbReference type="NCBI Taxonomy" id="321314"/>
    <lineage>
        <taxon>Bacteria</taxon>
        <taxon>Pseudomonadati</taxon>
        <taxon>Pseudomonadota</taxon>
        <taxon>Gammaproteobacteria</taxon>
        <taxon>Enterobacterales</taxon>
        <taxon>Enterobacteriaceae</taxon>
        <taxon>Salmonella</taxon>
    </lineage>
</organism>
<evidence type="ECO:0000255" key="1">
    <source>
        <dbReference type="HAMAP-Rule" id="MF_00015"/>
    </source>
</evidence>